<comment type="function">
    <text evidence="1">F(1)F(0) ATP synthase produces ATP from ADP in the presence of a proton or sodium gradient. F-type ATPases consist of two structural domains, F(1) containing the extramembraneous catalytic core and F(0) containing the membrane proton channel, linked together by a central stalk and a peripheral stalk. During catalysis, ATP synthesis in the catalytic domain of F(1) is coupled via a rotary mechanism of the central stalk subunits to proton translocation.</text>
</comment>
<comment type="function">
    <text evidence="1">This protein is part of the stalk that links CF(0) to CF(1). It either transmits conformational changes from CF(0) to CF(1) or is implicated in proton conduction.</text>
</comment>
<comment type="subunit">
    <text evidence="1">F-type ATPases have 2 components, F(1) - the catalytic core - and F(0) - the membrane proton channel. F(1) has five subunits: alpha(3), beta(3), gamma(1), delta(1), epsilon(1). F(0) has three main subunits: a(1), b(2) and c(10-14). The alpha and beta chains form an alternating ring which encloses part of the gamma chain. F(1) is attached to F(0) by a central stalk formed by the gamma and epsilon chains, while a peripheral stalk is formed by the delta and b chains.</text>
</comment>
<comment type="subcellular location">
    <subcellularLocation>
        <location evidence="1">Cell inner membrane</location>
        <topology evidence="1">Peripheral membrane protein</topology>
    </subcellularLocation>
</comment>
<comment type="similarity">
    <text evidence="1">Belongs to the ATPase delta chain family.</text>
</comment>
<accession>B6YR07</accession>
<protein>
    <recommendedName>
        <fullName evidence="1">ATP synthase subunit delta</fullName>
    </recommendedName>
    <alternativeName>
        <fullName evidence="1">ATP synthase F(1) sector subunit delta</fullName>
    </alternativeName>
    <alternativeName>
        <fullName evidence="1">F-type ATPase subunit delta</fullName>
        <shortName evidence="1">F-ATPase subunit delta</shortName>
    </alternativeName>
</protein>
<evidence type="ECO:0000255" key="1">
    <source>
        <dbReference type="HAMAP-Rule" id="MF_01416"/>
    </source>
</evidence>
<feature type="chain" id="PRO_1000184644" description="ATP synthase subunit delta">
    <location>
        <begin position="1"/>
        <end position="177"/>
    </location>
</feature>
<organism>
    <name type="scientific">Azobacteroides pseudotrichonymphae genomovar. CFP2</name>
    <dbReference type="NCBI Taxonomy" id="511995"/>
    <lineage>
        <taxon>Bacteria</taxon>
        <taxon>Pseudomonadati</taxon>
        <taxon>Bacteroidota</taxon>
        <taxon>Bacteroidia</taxon>
        <taxon>Bacteroidales</taxon>
        <taxon>Candidatus Azobacteroides</taxon>
    </lineage>
</organism>
<dbReference type="EMBL" id="AP010656">
    <property type="protein sequence ID" value="BAG83629.1"/>
    <property type="molecule type" value="Genomic_DNA"/>
</dbReference>
<dbReference type="RefSeq" id="WP_012573390.1">
    <property type="nucleotide sequence ID" value="NC_011565.1"/>
</dbReference>
<dbReference type="SMR" id="B6YR07"/>
<dbReference type="STRING" id="511995.CFPG_366"/>
<dbReference type="KEGG" id="aps:CFPG_366"/>
<dbReference type="eggNOG" id="COG0712">
    <property type="taxonomic scope" value="Bacteria"/>
</dbReference>
<dbReference type="HOGENOM" id="CLU_085114_4_0_10"/>
<dbReference type="OrthoDB" id="9802471at2"/>
<dbReference type="Proteomes" id="UP000000723">
    <property type="component" value="Chromosome"/>
</dbReference>
<dbReference type="GO" id="GO:0005886">
    <property type="term" value="C:plasma membrane"/>
    <property type="evidence" value="ECO:0007669"/>
    <property type="project" value="UniProtKB-SubCell"/>
</dbReference>
<dbReference type="GO" id="GO:0045259">
    <property type="term" value="C:proton-transporting ATP synthase complex"/>
    <property type="evidence" value="ECO:0007669"/>
    <property type="project" value="UniProtKB-KW"/>
</dbReference>
<dbReference type="GO" id="GO:0046933">
    <property type="term" value="F:proton-transporting ATP synthase activity, rotational mechanism"/>
    <property type="evidence" value="ECO:0007669"/>
    <property type="project" value="UniProtKB-UniRule"/>
</dbReference>
<dbReference type="Gene3D" id="1.10.520.20">
    <property type="entry name" value="N-terminal domain of the delta subunit of the F1F0-ATP synthase"/>
    <property type="match status" value="1"/>
</dbReference>
<dbReference type="HAMAP" id="MF_01416">
    <property type="entry name" value="ATP_synth_delta_bact"/>
    <property type="match status" value="1"/>
</dbReference>
<dbReference type="InterPro" id="IPR026015">
    <property type="entry name" value="ATP_synth_OSCP/delta_N_sf"/>
</dbReference>
<dbReference type="InterPro" id="IPR020781">
    <property type="entry name" value="ATPase_OSCP/d_CS"/>
</dbReference>
<dbReference type="InterPro" id="IPR000711">
    <property type="entry name" value="ATPase_OSCP/dsu"/>
</dbReference>
<dbReference type="NCBIfam" id="TIGR01145">
    <property type="entry name" value="ATP_synt_delta"/>
    <property type="match status" value="1"/>
</dbReference>
<dbReference type="PANTHER" id="PTHR11910">
    <property type="entry name" value="ATP SYNTHASE DELTA CHAIN"/>
    <property type="match status" value="1"/>
</dbReference>
<dbReference type="Pfam" id="PF00213">
    <property type="entry name" value="OSCP"/>
    <property type="match status" value="1"/>
</dbReference>
<dbReference type="PRINTS" id="PR00125">
    <property type="entry name" value="ATPASEDELTA"/>
</dbReference>
<dbReference type="SUPFAM" id="SSF47928">
    <property type="entry name" value="N-terminal domain of the delta subunit of the F1F0-ATP synthase"/>
    <property type="match status" value="1"/>
</dbReference>
<dbReference type="PROSITE" id="PS00389">
    <property type="entry name" value="ATPASE_DELTA"/>
    <property type="match status" value="1"/>
</dbReference>
<gene>
    <name evidence="1" type="primary">atpH</name>
    <name type="ordered locus">CFPG_366</name>
</gene>
<keyword id="KW-0066">ATP synthesis</keyword>
<keyword id="KW-0997">Cell inner membrane</keyword>
<keyword id="KW-1003">Cell membrane</keyword>
<keyword id="KW-0139">CF(1)</keyword>
<keyword id="KW-0375">Hydrogen ion transport</keyword>
<keyword id="KW-0406">Ion transport</keyword>
<keyword id="KW-0472">Membrane</keyword>
<keyword id="KW-1185">Reference proteome</keyword>
<keyword id="KW-0813">Transport</keyword>
<reference key="1">
    <citation type="journal article" date="2008" name="Science">
        <title>Genome of an endosymbiont coupling N2 fixation to cellulolysis within RT protist cells in termite gut.</title>
        <authorList>
            <person name="Hongoh Y."/>
            <person name="Sharma V.K."/>
            <person name="Prakash T."/>
            <person name="Noda S."/>
            <person name="Toh H."/>
            <person name="Taylor T.D."/>
            <person name="Kudo T."/>
            <person name="Sakaki Y."/>
            <person name="Toyoda A."/>
            <person name="Hattori M."/>
            <person name="Ohkuma M."/>
        </authorList>
    </citation>
    <scope>NUCLEOTIDE SEQUENCE [LARGE SCALE GENOMIC DNA]</scope>
</reference>
<proteinExistence type="inferred from homology"/>
<name>ATPD_AZOPC</name>
<sequence>MEAGKISTRYARAIYEYALEQGNETILYKGMQSLAKHFAMYPVLKKSINDPTLSDENKIKLLIAACRIDSNKTLKQAIKVIVKNGRAYYIERIARMYEKEYRQSKGLVLAQLTTVGLTTNNEAKKLLIKFLSNKTNGQIEFKTILNLDIIGGFILEIEDLLLDASVKRQLNQIKCQI</sequence>